<gene>
    <name evidence="1" type="primary">gatB</name>
    <name type="ordered locus">RT0140</name>
</gene>
<name>GATB_RICTY</name>
<proteinExistence type="inferred from homology"/>
<accession>Q68XL7</accession>
<keyword id="KW-0067">ATP-binding</keyword>
<keyword id="KW-0436">Ligase</keyword>
<keyword id="KW-0547">Nucleotide-binding</keyword>
<keyword id="KW-0648">Protein biosynthesis</keyword>
<comment type="function">
    <text evidence="1">Allows the formation of correctly charged Asn-tRNA(Asn) or Gln-tRNA(Gln) through the transamidation of misacylated Asp-tRNA(Asn) or Glu-tRNA(Gln) in organisms which lack either or both of asparaginyl-tRNA or glutaminyl-tRNA synthetases. The reaction takes place in the presence of glutamine and ATP through an activated phospho-Asp-tRNA(Asn) or phospho-Glu-tRNA(Gln).</text>
</comment>
<comment type="catalytic activity">
    <reaction evidence="1">
        <text>L-glutamyl-tRNA(Gln) + L-glutamine + ATP + H2O = L-glutaminyl-tRNA(Gln) + L-glutamate + ADP + phosphate + H(+)</text>
        <dbReference type="Rhea" id="RHEA:17521"/>
        <dbReference type="Rhea" id="RHEA-COMP:9681"/>
        <dbReference type="Rhea" id="RHEA-COMP:9684"/>
        <dbReference type="ChEBI" id="CHEBI:15377"/>
        <dbReference type="ChEBI" id="CHEBI:15378"/>
        <dbReference type="ChEBI" id="CHEBI:29985"/>
        <dbReference type="ChEBI" id="CHEBI:30616"/>
        <dbReference type="ChEBI" id="CHEBI:43474"/>
        <dbReference type="ChEBI" id="CHEBI:58359"/>
        <dbReference type="ChEBI" id="CHEBI:78520"/>
        <dbReference type="ChEBI" id="CHEBI:78521"/>
        <dbReference type="ChEBI" id="CHEBI:456216"/>
    </reaction>
</comment>
<comment type="catalytic activity">
    <reaction evidence="1">
        <text>L-aspartyl-tRNA(Asn) + L-glutamine + ATP + H2O = L-asparaginyl-tRNA(Asn) + L-glutamate + ADP + phosphate + 2 H(+)</text>
        <dbReference type="Rhea" id="RHEA:14513"/>
        <dbReference type="Rhea" id="RHEA-COMP:9674"/>
        <dbReference type="Rhea" id="RHEA-COMP:9677"/>
        <dbReference type="ChEBI" id="CHEBI:15377"/>
        <dbReference type="ChEBI" id="CHEBI:15378"/>
        <dbReference type="ChEBI" id="CHEBI:29985"/>
        <dbReference type="ChEBI" id="CHEBI:30616"/>
        <dbReference type="ChEBI" id="CHEBI:43474"/>
        <dbReference type="ChEBI" id="CHEBI:58359"/>
        <dbReference type="ChEBI" id="CHEBI:78515"/>
        <dbReference type="ChEBI" id="CHEBI:78516"/>
        <dbReference type="ChEBI" id="CHEBI:456216"/>
    </reaction>
</comment>
<comment type="subunit">
    <text evidence="1">Heterotrimer of A, B and C subunits.</text>
</comment>
<comment type="similarity">
    <text evidence="1">Belongs to the GatB/GatE family. GatB subfamily.</text>
</comment>
<reference key="1">
    <citation type="journal article" date="2004" name="J. Bacteriol.">
        <title>Complete genome sequence of Rickettsia typhi and comparison with sequences of other Rickettsiae.</title>
        <authorList>
            <person name="McLeod M.P."/>
            <person name="Qin X."/>
            <person name="Karpathy S.E."/>
            <person name="Gioia J."/>
            <person name="Highlander S.K."/>
            <person name="Fox G.E."/>
            <person name="McNeill T.Z."/>
            <person name="Jiang H."/>
            <person name="Muzny D."/>
            <person name="Jacob L.S."/>
            <person name="Hawes A.C."/>
            <person name="Sodergren E."/>
            <person name="Gill R."/>
            <person name="Hume J."/>
            <person name="Morgan M."/>
            <person name="Fan G."/>
            <person name="Amin A.G."/>
            <person name="Gibbs R.A."/>
            <person name="Hong C."/>
            <person name="Yu X.-J."/>
            <person name="Walker D.H."/>
            <person name="Weinstock G.M."/>
        </authorList>
    </citation>
    <scope>NUCLEOTIDE SEQUENCE [LARGE SCALE GENOMIC DNA]</scope>
    <source>
        <strain>ATCC VR-144 / Wilmington</strain>
    </source>
</reference>
<evidence type="ECO:0000255" key="1">
    <source>
        <dbReference type="HAMAP-Rule" id="MF_00121"/>
    </source>
</evidence>
<dbReference type="EC" id="6.3.5.-" evidence="1"/>
<dbReference type="EMBL" id="AE017197">
    <property type="protein sequence ID" value="AAU03625.1"/>
    <property type="molecule type" value="Genomic_DNA"/>
</dbReference>
<dbReference type="RefSeq" id="WP_011190612.1">
    <property type="nucleotide sequence ID" value="NC_006142.1"/>
</dbReference>
<dbReference type="SMR" id="Q68XL7"/>
<dbReference type="KEGG" id="rty:RT0140"/>
<dbReference type="eggNOG" id="COG0064">
    <property type="taxonomic scope" value="Bacteria"/>
</dbReference>
<dbReference type="HOGENOM" id="CLU_019240_0_0_5"/>
<dbReference type="OrthoDB" id="9804078at2"/>
<dbReference type="Proteomes" id="UP000000604">
    <property type="component" value="Chromosome"/>
</dbReference>
<dbReference type="GO" id="GO:0030956">
    <property type="term" value="C:glutamyl-tRNA(Gln) amidotransferase complex"/>
    <property type="evidence" value="ECO:0007669"/>
    <property type="project" value="TreeGrafter"/>
</dbReference>
<dbReference type="GO" id="GO:0050566">
    <property type="term" value="F:asparaginyl-tRNA synthase (glutamine-hydrolyzing) activity"/>
    <property type="evidence" value="ECO:0007669"/>
    <property type="project" value="RHEA"/>
</dbReference>
<dbReference type="GO" id="GO:0005524">
    <property type="term" value="F:ATP binding"/>
    <property type="evidence" value="ECO:0007669"/>
    <property type="project" value="UniProtKB-KW"/>
</dbReference>
<dbReference type="GO" id="GO:0050567">
    <property type="term" value="F:glutaminyl-tRNA synthase (glutamine-hydrolyzing) activity"/>
    <property type="evidence" value="ECO:0007669"/>
    <property type="project" value="UniProtKB-UniRule"/>
</dbReference>
<dbReference type="GO" id="GO:0070681">
    <property type="term" value="P:glutaminyl-tRNAGln biosynthesis via transamidation"/>
    <property type="evidence" value="ECO:0007669"/>
    <property type="project" value="TreeGrafter"/>
</dbReference>
<dbReference type="GO" id="GO:0006412">
    <property type="term" value="P:translation"/>
    <property type="evidence" value="ECO:0007669"/>
    <property type="project" value="UniProtKB-UniRule"/>
</dbReference>
<dbReference type="FunFam" id="1.10.10.410:FF:000001">
    <property type="entry name" value="Aspartyl/glutamyl-tRNA(Asn/Gln) amidotransferase subunit B"/>
    <property type="match status" value="1"/>
</dbReference>
<dbReference type="Gene3D" id="1.10.10.410">
    <property type="match status" value="1"/>
</dbReference>
<dbReference type="Gene3D" id="1.10.150.380">
    <property type="entry name" value="GatB domain, N-terminal subdomain"/>
    <property type="match status" value="1"/>
</dbReference>
<dbReference type="HAMAP" id="MF_00121">
    <property type="entry name" value="GatB"/>
    <property type="match status" value="1"/>
</dbReference>
<dbReference type="InterPro" id="IPR017959">
    <property type="entry name" value="Asn/Gln-tRNA_amidoTrfase_suB/E"/>
</dbReference>
<dbReference type="InterPro" id="IPR006075">
    <property type="entry name" value="Asn/Gln-tRNA_Trfase_suB/E_cat"/>
</dbReference>
<dbReference type="InterPro" id="IPR018027">
    <property type="entry name" value="Asn/Gln_amidotransferase"/>
</dbReference>
<dbReference type="InterPro" id="IPR003789">
    <property type="entry name" value="Asn/Gln_tRNA_amidoTrase-B-like"/>
</dbReference>
<dbReference type="InterPro" id="IPR004413">
    <property type="entry name" value="GatB"/>
</dbReference>
<dbReference type="InterPro" id="IPR042114">
    <property type="entry name" value="GatB_C_1"/>
</dbReference>
<dbReference type="InterPro" id="IPR023168">
    <property type="entry name" value="GatB_Yqey_C_2"/>
</dbReference>
<dbReference type="InterPro" id="IPR017958">
    <property type="entry name" value="Gln-tRNA_amidoTrfase_suB_CS"/>
</dbReference>
<dbReference type="InterPro" id="IPR014746">
    <property type="entry name" value="Gln_synth/guanido_kin_cat_dom"/>
</dbReference>
<dbReference type="NCBIfam" id="TIGR00133">
    <property type="entry name" value="gatB"/>
    <property type="match status" value="1"/>
</dbReference>
<dbReference type="NCBIfam" id="NF004012">
    <property type="entry name" value="PRK05477.1-2"/>
    <property type="match status" value="1"/>
</dbReference>
<dbReference type="NCBIfam" id="NF004014">
    <property type="entry name" value="PRK05477.1-4"/>
    <property type="match status" value="1"/>
</dbReference>
<dbReference type="NCBIfam" id="NF004015">
    <property type="entry name" value="PRK05477.1-5"/>
    <property type="match status" value="1"/>
</dbReference>
<dbReference type="PANTHER" id="PTHR11659">
    <property type="entry name" value="GLUTAMYL-TRNA GLN AMIDOTRANSFERASE SUBUNIT B MITOCHONDRIAL AND PROKARYOTIC PET112-RELATED"/>
    <property type="match status" value="1"/>
</dbReference>
<dbReference type="PANTHER" id="PTHR11659:SF0">
    <property type="entry name" value="GLUTAMYL-TRNA(GLN) AMIDOTRANSFERASE SUBUNIT B, MITOCHONDRIAL"/>
    <property type="match status" value="1"/>
</dbReference>
<dbReference type="Pfam" id="PF02934">
    <property type="entry name" value="GatB_N"/>
    <property type="match status" value="1"/>
</dbReference>
<dbReference type="Pfam" id="PF02637">
    <property type="entry name" value="GatB_Yqey"/>
    <property type="match status" value="1"/>
</dbReference>
<dbReference type="SMART" id="SM00845">
    <property type="entry name" value="GatB_Yqey"/>
    <property type="match status" value="1"/>
</dbReference>
<dbReference type="SUPFAM" id="SSF89095">
    <property type="entry name" value="GatB/YqeY motif"/>
    <property type="match status" value="1"/>
</dbReference>
<dbReference type="SUPFAM" id="SSF55931">
    <property type="entry name" value="Glutamine synthetase/guanido kinase"/>
    <property type="match status" value="1"/>
</dbReference>
<dbReference type="PROSITE" id="PS01234">
    <property type="entry name" value="GATB"/>
    <property type="match status" value="1"/>
</dbReference>
<protein>
    <recommendedName>
        <fullName evidence="1">Aspartyl/glutamyl-tRNA(Asn/Gln) amidotransferase subunit B</fullName>
        <shortName evidence="1">Asp/Glu-ADT subunit B</shortName>
        <ecNumber evidence="1">6.3.5.-</ecNumber>
    </recommendedName>
</protein>
<sequence length="483" mass="54244">MEYIEGNTGKWEYVIGLEIHAQISSKTKLFSGSSTLFAASPNSQVSYVDAAMPGMLPVLNKHCVHQAIKTGLALKAKINKYSVFDRKNYFYADLPQGYQISQFYYPIVQDGMIEIQTSTGNLKTIRINRLHLEQDAGKSIHDQSPYYSMIDLNRAGIGLMEIVTEPDISSPEEAAEFVKKLRNLLRYIGSCDGDMEKGSLRCDANISVRRSGEALGTRCEIKNINSIRNIIKAIEFEAKRQVDLLESGEAIIQETRLFNVDSCETKTMRLKEEALDYRYFPDPDLLPLVIHDELINELKSSLPELPDQKIEKYTKKFGLSKYDAGIIVSDESIAEYFEKAANECNPKMLTNWLITELFGQLNKASIGISECKITPSDFAKLIKLIENNTISGKIAKTVFEIMFATGKAPDKIVEEKGLVQISDNKILNTVIDEVIAENSKSVKCYKSGKDKLFGFFVGQVMKKTKCKANPTLVNKLLKEKLDS</sequence>
<feature type="chain" id="PRO_0000241272" description="Aspartyl/glutamyl-tRNA(Asn/Gln) amidotransferase subunit B">
    <location>
        <begin position="1"/>
        <end position="483"/>
    </location>
</feature>
<organism>
    <name type="scientific">Rickettsia typhi (strain ATCC VR-144 / Wilmington)</name>
    <dbReference type="NCBI Taxonomy" id="257363"/>
    <lineage>
        <taxon>Bacteria</taxon>
        <taxon>Pseudomonadati</taxon>
        <taxon>Pseudomonadota</taxon>
        <taxon>Alphaproteobacteria</taxon>
        <taxon>Rickettsiales</taxon>
        <taxon>Rickettsiaceae</taxon>
        <taxon>Rickettsieae</taxon>
        <taxon>Rickettsia</taxon>
        <taxon>typhus group</taxon>
    </lineage>
</organism>